<reference key="1">
    <citation type="journal article" date="2001" name="Lancet">
        <title>Whole genome sequencing of meticillin-resistant Staphylococcus aureus.</title>
        <authorList>
            <person name="Kuroda M."/>
            <person name="Ohta T."/>
            <person name="Uchiyama I."/>
            <person name="Baba T."/>
            <person name="Yuzawa H."/>
            <person name="Kobayashi I."/>
            <person name="Cui L."/>
            <person name="Oguchi A."/>
            <person name="Aoki K."/>
            <person name="Nagai Y."/>
            <person name="Lian J.-Q."/>
            <person name="Ito T."/>
            <person name="Kanamori M."/>
            <person name="Matsumaru H."/>
            <person name="Maruyama A."/>
            <person name="Murakami H."/>
            <person name="Hosoyama A."/>
            <person name="Mizutani-Ui Y."/>
            <person name="Takahashi N.K."/>
            <person name="Sawano T."/>
            <person name="Inoue R."/>
            <person name="Kaito C."/>
            <person name="Sekimizu K."/>
            <person name="Hirakawa H."/>
            <person name="Kuhara S."/>
            <person name="Goto S."/>
            <person name="Yabuzaki J."/>
            <person name="Kanehisa M."/>
            <person name="Yamashita A."/>
            <person name="Oshima K."/>
            <person name="Furuya K."/>
            <person name="Yoshino C."/>
            <person name="Shiba T."/>
            <person name="Hattori M."/>
            <person name="Ogasawara N."/>
            <person name="Hayashi H."/>
            <person name="Hiramatsu K."/>
        </authorList>
    </citation>
    <scope>NUCLEOTIDE SEQUENCE [LARGE SCALE GENOMIC DNA]</scope>
    <source>
        <strain>Mu50 / ATCC 700699</strain>
    </source>
</reference>
<keyword id="KW-0067">ATP-binding</keyword>
<keyword id="KW-0963">Cytoplasm</keyword>
<keyword id="KW-0237">DNA synthesis</keyword>
<keyword id="KW-0418">Kinase</keyword>
<keyword id="KW-0479">Metal-binding</keyword>
<keyword id="KW-0547">Nucleotide-binding</keyword>
<keyword id="KW-0808">Transferase</keyword>
<keyword id="KW-0862">Zinc</keyword>
<dbReference type="EC" id="2.7.1.21" evidence="1"/>
<dbReference type="EMBL" id="BA000017">
    <property type="protein sequence ID" value="BAB58281.1"/>
    <property type="molecule type" value="Genomic_DNA"/>
</dbReference>
<dbReference type="RefSeq" id="WP_000273358.1">
    <property type="nucleotide sequence ID" value="NC_002758.2"/>
</dbReference>
<dbReference type="SMR" id="P65230"/>
<dbReference type="KEGG" id="sav:SAV2119"/>
<dbReference type="HOGENOM" id="CLU_064400_3_0_9"/>
<dbReference type="PhylomeDB" id="P65230"/>
<dbReference type="Proteomes" id="UP000002481">
    <property type="component" value="Chromosome"/>
</dbReference>
<dbReference type="GO" id="GO:0005829">
    <property type="term" value="C:cytosol"/>
    <property type="evidence" value="ECO:0007669"/>
    <property type="project" value="TreeGrafter"/>
</dbReference>
<dbReference type="GO" id="GO:0005524">
    <property type="term" value="F:ATP binding"/>
    <property type="evidence" value="ECO:0007669"/>
    <property type="project" value="UniProtKB-UniRule"/>
</dbReference>
<dbReference type="GO" id="GO:0004797">
    <property type="term" value="F:thymidine kinase activity"/>
    <property type="evidence" value="ECO:0007669"/>
    <property type="project" value="UniProtKB-UniRule"/>
</dbReference>
<dbReference type="GO" id="GO:0008270">
    <property type="term" value="F:zinc ion binding"/>
    <property type="evidence" value="ECO:0007669"/>
    <property type="project" value="UniProtKB-UniRule"/>
</dbReference>
<dbReference type="GO" id="GO:0071897">
    <property type="term" value="P:DNA biosynthetic process"/>
    <property type="evidence" value="ECO:0007669"/>
    <property type="project" value="UniProtKB-KW"/>
</dbReference>
<dbReference type="GO" id="GO:0046104">
    <property type="term" value="P:thymidine metabolic process"/>
    <property type="evidence" value="ECO:0007669"/>
    <property type="project" value="TreeGrafter"/>
</dbReference>
<dbReference type="FunFam" id="3.30.60.20:FF:000026">
    <property type="entry name" value="Thymidine kinase"/>
    <property type="match status" value="1"/>
</dbReference>
<dbReference type="FunFam" id="3.40.50.300:FF:000384">
    <property type="entry name" value="Thymidine kinase"/>
    <property type="match status" value="1"/>
</dbReference>
<dbReference type="Gene3D" id="3.30.60.20">
    <property type="match status" value="1"/>
</dbReference>
<dbReference type="Gene3D" id="3.40.50.300">
    <property type="entry name" value="P-loop containing nucleotide triphosphate hydrolases"/>
    <property type="match status" value="1"/>
</dbReference>
<dbReference type="HAMAP" id="MF_00124">
    <property type="entry name" value="Thymidine_kinase"/>
    <property type="match status" value="1"/>
</dbReference>
<dbReference type="InterPro" id="IPR027417">
    <property type="entry name" value="P-loop_NTPase"/>
</dbReference>
<dbReference type="InterPro" id="IPR001267">
    <property type="entry name" value="Thymidine_kinase"/>
</dbReference>
<dbReference type="InterPro" id="IPR020633">
    <property type="entry name" value="Thymidine_kinase_CS"/>
</dbReference>
<dbReference type="NCBIfam" id="NF003296">
    <property type="entry name" value="PRK04296.1-1"/>
    <property type="match status" value="1"/>
</dbReference>
<dbReference type="PANTHER" id="PTHR11441">
    <property type="entry name" value="THYMIDINE KINASE"/>
    <property type="match status" value="1"/>
</dbReference>
<dbReference type="PANTHER" id="PTHR11441:SF0">
    <property type="entry name" value="THYMIDINE KINASE, CYTOSOLIC"/>
    <property type="match status" value="1"/>
</dbReference>
<dbReference type="Pfam" id="PF00265">
    <property type="entry name" value="TK"/>
    <property type="match status" value="1"/>
</dbReference>
<dbReference type="PIRSF" id="PIRSF035805">
    <property type="entry name" value="TK_cell"/>
    <property type="match status" value="1"/>
</dbReference>
<dbReference type="SUPFAM" id="SSF57716">
    <property type="entry name" value="Glucocorticoid receptor-like (DNA-binding domain)"/>
    <property type="match status" value="1"/>
</dbReference>
<dbReference type="SUPFAM" id="SSF52540">
    <property type="entry name" value="P-loop containing nucleoside triphosphate hydrolases"/>
    <property type="match status" value="1"/>
</dbReference>
<dbReference type="PROSITE" id="PS00603">
    <property type="entry name" value="TK_CELLULAR_TYPE"/>
    <property type="match status" value="1"/>
</dbReference>
<feature type="chain" id="PRO_0000175019" description="Thymidine kinase">
    <location>
        <begin position="1"/>
        <end position="199"/>
    </location>
</feature>
<feature type="active site" description="Proton acceptor" evidence="1">
    <location>
        <position position="89"/>
    </location>
</feature>
<feature type="binding site" evidence="1">
    <location>
        <begin position="15"/>
        <end position="22"/>
    </location>
    <ligand>
        <name>ATP</name>
        <dbReference type="ChEBI" id="CHEBI:30616"/>
    </ligand>
</feature>
<feature type="binding site" evidence="1">
    <location>
        <begin position="88"/>
        <end position="91"/>
    </location>
    <ligand>
        <name>ATP</name>
        <dbReference type="ChEBI" id="CHEBI:30616"/>
    </ligand>
</feature>
<feature type="binding site" evidence="1">
    <location>
        <position position="145"/>
    </location>
    <ligand>
        <name>Zn(2+)</name>
        <dbReference type="ChEBI" id="CHEBI:29105"/>
    </ligand>
</feature>
<feature type="binding site" evidence="1">
    <location>
        <position position="148"/>
    </location>
    <ligand>
        <name>Zn(2+)</name>
        <dbReference type="ChEBI" id="CHEBI:29105"/>
    </ligand>
</feature>
<feature type="binding site" evidence="1">
    <location>
        <position position="183"/>
    </location>
    <ligand>
        <name>Zn(2+)</name>
        <dbReference type="ChEBI" id="CHEBI:29105"/>
    </ligand>
</feature>
<feature type="binding site" evidence="1">
    <location>
        <position position="186"/>
    </location>
    <ligand>
        <name>Zn(2+)</name>
        <dbReference type="ChEBI" id="CHEBI:29105"/>
    </ligand>
</feature>
<proteinExistence type="inferred from homology"/>
<evidence type="ECO:0000255" key="1">
    <source>
        <dbReference type="HAMAP-Rule" id="MF_00124"/>
    </source>
</evidence>
<protein>
    <recommendedName>
        <fullName evidence="1">Thymidine kinase</fullName>
        <ecNumber evidence="1">2.7.1.21</ecNumber>
    </recommendedName>
</protein>
<name>KITH_STAAM</name>
<accession>P65230</accession>
<accession>Q99SD9</accession>
<gene>
    <name evidence="1" type="primary">tdk</name>
    <name type="ordered locus">SAV2119</name>
</gene>
<sequence length="199" mass="22213">MYETYHSGWIECITGSMFSGKSEELIRRLRRGIYAKQKVVVFKPAIDDRYHKEKVVSHNGNAIEAINISKASEIMTHNLTNVDVIGIDEVQFFDDEIVSIVEKLSADGHRVIVAGLDMDFRGEPFEPMPKLMAVSEQVTKLQAVCAVCGSSSSRTQRLINGKPAKIDDPIILVGANESYEPRCRAHHIVAPSDNNKEEL</sequence>
<organism>
    <name type="scientific">Staphylococcus aureus (strain Mu50 / ATCC 700699)</name>
    <dbReference type="NCBI Taxonomy" id="158878"/>
    <lineage>
        <taxon>Bacteria</taxon>
        <taxon>Bacillati</taxon>
        <taxon>Bacillota</taxon>
        <taxon>Bacilli</taxon>
        <taxon>Bacillales</taxon>
        <taxon>Staphylococcaceae</taxon>
        <taxon>Staphylococcus</taxon>
    </lineage>
</organism>
<comment type="catalytic activity">
    <reaction evidence="1">
        <text>thymidine + ATP = dTMP + ADP + H(+)</text>
        <dbReference type="Rhea" id="RHEA:19129"/>
        <dbReference type="ChEBI" id="CHEBI:15378"/>
        <dbReference type="ChEBI" id="CHEBI:17748"/>
        <dbReference type="ChEBI" id="CHEBI:30616"/>
        <dbReference type="ChEBI" id="CHEBI:63528"/>
        <dbReference type="ChEBI" id="CHEBI:456216"/>
        <dbReference type="EC" id="2.7.1.21"/>
    </reaction>
</comment>
<comment type="subunit">
    <text evidence="1">Homotetramer.</text>
</comment>
<comment type="subcellular location">
    <subcellularLocation>
        <location evidence="1">Cytoplasm</location>
    </subcellularLocation>
</comment>
<comment type="similarity">
    <text evidence="1">Belongs to the thymidine kinase family.</text>
</comment>